<proteinExistence type="inferred from homology"/>
<keyword id="KW-0150">Chloroplast</keyword>
<keyword id="KW-0934">Plastid</keyword>
<keyword id="KW-0687">Ribonucleoprotein</keyword>
<keyword id="KW-0689">Ribosomal protein</keyword>
<keyword id="KW-0694">RNA-binding</keyword>
<keyword id="KW-0699">rRNA-binding</keyword>
<organism>
    <name type="scientific">Barbarea verna</name>
    <name type="common">Land cress</name>
    <name type="synonym">Erysimum vernum</name>
    <dbReference type="NCBI Taxonomy" id="50458"/>
    <lineage>
        <taxon>Eukaryota</taxon>
        <taxon>Viridiplantae</taxon>
        <taxon>Streptophyta</taxon>
        <taxon>Embryophyta</taxon>
        <taxon>Tracheophyta</taxon>
        <taxon>Spermatophyta</taxon>
        <taxon>Magnoliopsida</taxon>
        <taxon>eudicotyledons</taxon>
        <taxon>Gunneridae</taxon>
        <taxon>Pentapetalae</taxon>
        <taxon>rosids</taxon>
        <taxon>malvids</taxon>
        <taxon>Brassicales</taxon>
        <taxon>Brassicaceae</taxon>
        <taxon>Cardamineae</taxon>
        <taxon>Barbarea</taxon>
    </lineage>
</organism>
<evidence type="ECO:0000250" key="1"/>
<evidence type="ECO:0000305" key="2"/>
<comment type="subunit">
    <text evidence="1">Part of the 30S ribosomal subunit.</text>
</comment>
<comment type="subcellular location">
    <subcellularLocation>
        <location>Plastid</location>
        <location>Chloroplast</location>
    </subcellularLocation>
</comment>
<comment type="similarity">
    <text evidence="2">Belongs to the universal ribosomal protein uS3 family.</text>
</comment>
<gene>
    <name type="primary">rps3</name>
</gene>
<dbReference type="EMBL" id="AP009370">
    <property type="protein sequence ID" value="BAF50148.1"/>
    <property type="molecule type" value="Genomic_DNA"/>
</dbReference>
<dbReference type="RefSeq" id="YP_001123324.1">
    <property type="nucleotide sequence ID" value="NC_009269.1"/>
</dbReference>
<dbReference type="SMR" id="A4QKE3"/>
<dbReference type="GeneID" id="4961864"/>
<dbReference type="GO" id="GO:0009507">
    <property type="term" value="C:chloroplast"/>
    <property type="evidence" value="ECO:0007669"/>
    <property type="project" value="UniProtKB-SubCell"/>
</dbReference>
<dbReference type="GO" id="GO:0022627">
    <property type="term" value="C:cytosolic small ribosomal subunit"/>
    <property type="evidence" value="ECO:0007669"/>
    <property type="project" value="TreeGrafter"/>
</dbReference>
<dbReference type="GO" id="GO:0019843">
    <property type="term" value="F:rRNA binding"/>
    <property type="evidence" value="ECO:0007669"/>
    <property type="project" value="UniProtKB-UniRule"/>
</dbReference>
<dbReference type="GO" id="GO:0003735">
    <property type="term" value="F:structural constituent of ribosome"/>
    <property type="evidence" value="ECO:0007669"/>
    <property type="project" value="InterPro"/>
</dbReference>
<dbReference type="GO" id="GO:0006412">
    <property type="term" value="P:translation"/>
    <property type="evidence" value="ECO:0007669"/>
    <property type="project" value="UniProtKB-UniRule"/>
</dbReference>
<dbReference type="CDD" id="cd02412">
    <property type="entry name" value="KH-II_30S_S3"/>
    <property type="match status" value="1"/>
</dbReference>
<dbReference type="FunFam" id="3.30.1140.32:FF:000003">
    <property type="entry name" value="30S ribosomal protein S3, chloroplastic"/>
    <property type="match status" value="1"/>
</dbReference>
<dbReference type="FunFam" id="3.30.300.20:FF:000008">
    <property type="entry name" value="30S ribosomal protein S3, chloroplastic"/>
    <property type="match status" value="1"/>
</dbReference>
<dbReference type="Gene3D" id="3.30.300.20">
    <property type="match status" value="1"/>
</dbReference>
<dbReference type="Gene3D" id="3.30.1140.32">
    <property type="entry name" value="Ribosomal protein S3, C-terminal domain"/>
    <property type="match status" value="1"/>
</dbReference>
<dbReference type="HAMAP" id="MF_01309_B">
    <property type="entry name" value="Ribosomal_uS3_B"/>
    <property type="match status" value="1"/>
</dbReference>
<dbReference type="InterPro" id="IPR015946">
    <property type="entry name" value="KH_dom-like_a/b"/>
</dbReference>
<dbReference type="InterPro" id="IPR004044">
    <property type="entry name" value="KH_dom_type_2"/>
</dbReference>
<dbReference type="InterPro" id="IPR009019">
    <property type="entry name" value="KH_sf_prok-type"/>
</dbReference>
<dbReference type="InterPro" id="IPR036419">
    <property type="entry name" value="Ribosomal_S3_C_sf"/>
</dbReference>
<dbReference type="InterPro" id="IPR005704">
    <property type="entry name" value="Ribosomal_uS3_bac-typ"/>
</dbReference>
<dbReference type="InterPro" id="IPR001351">
    <property type="entry name" value="Ribosomal_uS3_C"/>
</dbReference>
<dbReference type="InterPro" id="IPR018280">
    <property type="entry name" value="Ribosomal_uS3_CS"/>
</dbReference>
<dbReference type="NCBIfam" id="TIGR01009">
    <property type="entry name" value="rpsC_bact"/>
    <property type="match status" value="1"/>
</dbReference>
<dbReference type="PANTHER" id="PTHR11760">
    <property type="entry name" value="30S/40S RIBOSOMAL PROTEIN S3"/>
    <property type="match status" value="1"/>
</dbReference>
<dbReference type="PANTHER" id="PTHR11760:SF19">
    <property type="entry name" value="SMALL RIBOSOMAL SUBUNIT PROTEIN US3C"/>
    <property type="match status" value="1"/>
</dbReference>
<dbReference type="Pfam" id="PF00189">
    <property type="entry name" value="Ribosomal_S3_C"/>
    <property type="match status" value="1"/>
</dbReference>
<dbReference type="SUPFAM" id="SSF54814">
    <property type="entry name" value="Prokaryotic type KH domain (KH-domain type II)"/>
    <property type="match status" value="1"/>
</dbReference>
<dbReference type="SUPFAM" id="SSF54821">
    <property type="entry name" value="Ribosomal protein S3 C-terminal domain"/>
    <property type="match status" value="1"/>
</dbReference>
<dbReference type="PROSITE" id="PS50823">
    <property type="entry name" value="KH_TYPE_2"/>
    <property type="match status" value="1"/>
</dbReference>
<dbReference type="PROSITE" id="PS00548">
    <property type="entry name" value="RIBOSOMAL_S3"/>
    <property type="match status" value="1"/>
</dbReference>
<feature type="chain" id="PRO_0000293938" description="Small ribosomal subunit protein uS3c">
    <location>
        <begin position="1"/>
        <end position="218"/>
    </location>
</feature>
<feature type="domain" description="KH type-2">
    <location>
        <begin position="47"/>
        <end position="118"/>
    </location>
</feature>
<accession>A4QKE3</accession>
<name>RR3_BARVE</name>
<protein>
    <recommendedName>
        <fullName evidence="2">Small ribosomal subunit protein uS3c</fullName>
    </recommendedName>
    <alternativeName>
        <fullName>30S ribosomal protein S3, chloroplastic</fullName>
    </alternativeName>
</protein>
<sequence>MGQKINPLGFRLGTTQSHHSLWFAQPKKYSEGLEEDKKIRDCIKNYVQKNIRISSGMEGIARIEIQKRIDLIQIIIYMGFPKLLIEDKPRRVEELRMNVQKELNCVNRKLNIAITRISNPYGDPNILAEFIAGQLKNRVSFRKAMKKAIELTEQANTKGIQVQIAGRIDGKEIARVEWIREGRVPLQTIEAKIDYCSYTVRTIYGVLGIKIWIFVDEA</sequence>
<geneLocation type="chloroplast"/>
<reference key="1">
    <citation type="submission" date="2007-03" db="EMBL/GenBank/DDBJ databases">
        <title>Sequencing analysis of Barbarea verna chloroplast DNA.</title>
        <authorList>
            <person name="Hosouchi T."/>
            <person name="Tsuruoka H."/>
            <person name="Kotani H."/>
        </authorList>
    </citation>
    <scope>NUCLEOTIDE SEQUENCE [LARGE SCALE GENOMIC DNA]</scope>
</reference>